<dbReference type="EC" id="5.4.3.8" evidence="1"/>
<dbReference type="EMBL" id="BX640450">
    <property type="protein sequence ID" value="CAE34772.1"/>
    <property type="molecule type" value="Genomic_DNA"/>
</dbReference>
<dbReference type="RefSeq" id="WP_003814987.1">
    <property type="nucleotide sequence ID" value="NC_002927.3"/>
</dbReference>
<dbReference type="SMR" id="Q7WF71"/>
<dbReference type="GeneID" id="56477092"/>
<dbReference type="KEGG" id="bbr:BB4409"/>
<dbReference type="eggNOG" id="COG0001">
    <property type="taxonomic scope" value="Bacteria"/>
</dbReference>
<dbReference type="HOGENOM" id="CLU_016922_1_5_4"/>
<dbReference type="UniPathway" id="UPA00251">
    <property type="reaction ID" value="UER00317"/>
</dbReference>
<dbReference type="Proteomes" id="UP000001027">
    <property type="component" value="Chromosome"/>
</dbReference>
<dbReference type="GO" id="GO:0005737">
    <property type="term" value="C:cytoplasm"/>
    <property type="evidence" value="ECO:0007669"/>
    <property type="project" value="UniProtKB-SubCell"/>
</dbReference>
<dbReference type="GO" id="GO:0042286">
    <property type="term" value="F:glutamate-1-semialdehyde 2,1-aminomutase activity"/>
    <property type="evidence" value="ECO:0007669"/>
    <property type="project" value="UniProtKB-UniRule"/>
</dbReference>
<dbReference type="GO" id="GO:0030170">
    <property type="term" value="F:pyridoxal phosphate binding"/>
    <property type="evidence" value="ECO:0007669"/>
    <property type="project" value="InterPro"/>
</dbReference>
<dbReference type="GO" id="GO:0008483">
    <property type="term" value="F:transaminase activity"/>
    <property type="evidence" value="ECO:0007669"/>
    <property type="project" value="InterPro"/>
</dbReference>
<dbReference type="GO" id="GO:0006782">
    <property type="term" value="P:protoporphyrinogen IX biosynthetic process"/>
    <property type="evidence" value="ECO:0007669"/>
    <property type="project" value="UniProtKB-UniRule"/>
</dbReference>
<dbReference type="CDD" id="cd00610">
    <property type="entry name" value="OAT_like"/>
    <property type="match status" value="1"/>
</dbReference>
<dbReference type="FunFam" id="3.40.640.10:FF:000021">
    <property type="entry name" value="Glutamate-1-semialdehyde 2,1-aminomutase"/>
    <property type="match status" value="1"/>
</dbReference>
<dbReference type="Gene3D" id="3.90.1150.10">
    <property type="entry name" value="Aspartate Aminotransferase, domain 1"/>
    <property type="match status" value="1"/>
</dbReference>
<dbReference type="Gene3D" id="3.40.640.10">
    <property type="entry name" value="Type I PLP-dependent aspartate aminotransferase-like (Major domain)"/>
    <property type="match status" value="1"/>
</dbReference>
<dbReference type="HAMAP" id="MF_00375">
    <property type="entry name" value="HemL_aminotrans_3"/>
    <property type="match status" value="1"/>
</dbReference>
<dbReference type="InterPro" id="IPR004639">
    <property type="entry name" value="4pyrrol_synth_GluAld_NH2Trfase"/>
</dbReference>
<dbReference type="InterPro" id="IPR005814">
    <property type="entry name" value="Aminotrans_3"/>
</dbReference>
<dbReference type="InterPro" id="IPR049704">
    <property type="entry name" value="Aminotrans_3_PPA_site"/>
</dbReference>
<dbReference type="InterPro" id="IPR015424">
    <property type="entry name" value="PyrdxlP-dep_Trfase"/>
</dbReference>
<dbReference type="InterPro" id="IPR015421">
    <property type="entry name" value="PyrdxlP-dep_Trfase_major"/>
</dbReference>
<dbReference type="InterPro" id="IPR015422">
    <property type="entry name" value="PyrdxlP-dep_Trfase_small"/>
</dbReference>
<dbReference type="NCBIfam" id="TIGR00713">
    <property type="entry name" value="hemL"/>
    <property type="match status" value="1"/>
</dbReference>
<dbReference type="NCBIfam" id="NF000818">
    <property type="entry name" value="PRK00062.1"/>
    <property type="match status" value="1"/>
</dbReference>
<dbReference type="PANTHER" id="PTHR43713">
    <property type="entry name" value="GLUTAMATE-1-SEMIALDEHYDE 2,1-AMINOMUTASE"/>
    <property type="match status" value="1"/>
</dbReference>
<dbReference type="PANTHER" id="PTHR43713:SF3">
    <property type="entry name" value="GLUTAMATE-1-SEMIALDEHYDE 2,1-AMINOMUTASE 1, CHLOROPLASTIC-RELATED"/>
    <property type="match status" value="1"/>
</dbReference>
<dbReference type="Pfam" id="PF00202">
    <property type="entry name" value="Aminotran_3"/>
    <property type="match status" value="1"/>
</dbReference>
<dbReference type="SUPFAM" id="SSF53383">
    <property type="entry name" value="PLP-dependent transferases"/>
    <property type="match status" value="1"/>
</dbReference>
<dbReference type="PROSITE" id="PS00600">
    <property type="entry name" value="AA_TRANSFER_CLASS_3"/>
    <property type="match status" value="1"/>
</dbReference>
<feature type="chain" id="PRO_0000243551" description="Glutamate-1-semialdehyde 2,1-aminomutase">
    <location>
        <begin position="1"/>
        <end position="427"/>
    </location>
</feature>
<feature type="modified residue" description="N6-(pyridoxal phosphate)lysine" evidence="1">
    <location>
        <position position="265"/>
    </location>
</feature>
<proteinExistence type="inferred from homology"/>
<organism>
    <name type="scientific">Bordetella bronchiseptica (strain ATCC BAA-588 / NCTC 13252 / RB50)</name>
    <name type="common">Alcaligenes bronchisepticus</name>
    <dbReference type="NCBI Taxonomy" id="257310"/>
    <lineage>
        <taxon>Bacteria</taxon>
        <taxon>Pseudomonadati</taxon>
        <taxon>Pseudomonadota</taxon>
        <taxon>Betaproteobacteria</taxon>
        <taxon>Burkholderiales</taxon>
        <taxon>Alcaligenaceae</taxon>
        <taxon>Bordetella</taxon>
    </lineage>
</organism>
<accession>Q7WF71</accession>
<sequence>MSTNAELFDRACRSIPGGVNSPVRAFRSVGGTPRFIQRAQGPYVWDAEGKQYIDYVGSWGPAILGHAHPEVVRAVQEAAVHGLSFGAPTEAEVELAEMLIARLPSLEQVRLVSSGTEATMTAIRLARGATGRHKIIKFEGCYHGHSDSLLVKAGSGLLTFGNPSSAGVPPEFVAHTLTLEFNNLAAVDAAFSQHGAEIACVIVEPVAGNMNLIKPAEGFLAGLRELCTRHGAVLIFDEVMTGFRVGPQGVQGLTGVRPDLTTLAKVIGGGMPVGAFGGRADLMAHIAPLGGVYQAGTLSGNPVAVAAGLATMRLIGEPGFYERLSAQTARLAQGLQERARAAGVPFSADAIGGMFGLYFGDRVPASFAEVSACDTEAFKRFFHAMLERGIHFAPSAFEAGFVSATHDDAVIDATLEAAEQVFATLRA</sequence>
<gene>
    <name evidence="1" type="primary">hemL</name>
    <name type="ordered locus">BB4409</name>
</gene>
<reference key="1">
    <citation type="journal article" date="2003" name="Nat. Genet.">
        <title>Comparative analysis of the genome sequences of Bordetella pertussis, Bordetella parapertussis and Bordetella bronchiseptica.</title>
        <authorList>
            <person name="Parkhill J."/>
            <person name="Sebaihia M."/>
            <person name="Preston A."/>
            <person name="Murphy L.D."/>
            <person name="Thomson N.R."/>
            <person name="Harris D.E."/>
            <person name="Holden M.T.G."/>
            <person name="Churcher C.M."/>
            <person name="Bentley S.D."/>
            <person name="Mungall K.L."/>
            <person name="Cerdeno-Tarraga A.-M."/>
            <person name="Temple L."/>
            <person name="James K.D."/>
            <person name="Harris B."/>
            <person name="Quail M.A."/>
            <person name="Achtman M."/>
            <person name="Atkin R."/>
            <person name="Baker S."/>
            <person name="Basham D."/>
            <person name="Bason N."/>
            <person name="Cherevach I."/>
            <person name="Chillingworth T."/>
            <person name="Collins M."/>
            <person name="Cronin A."/>
            <person name="Davis P."/>
            <person name="Doggett J."/>
            <person name="Feltwell T."/>
            <person name="Goble A."/>
            <person name="Hamlin N."/>
            <person name="Hauser H."/>
            <person name="Holroyd S."/>
            <person name="Jagels K."/>
            <person name="Leather S."/>
            <person name="Moule S."/>
            <person name="Norberczak H."/>
            <person name="O'Neil S."/>
            <person name="Ormond D."/>
            <person name="Price C."/>
            <person name="Rabbinowitsch E."/>
            <person name="Rutter S."/>
            <person name="Sanders M."/>
            <person name="Saunders D."/>
            <person name="Seeger K."/>
            <person name="Sharp S."/>
            <person name="Simmonds M."/>
            <person name="Skelton J."/>
            <person name="Squares R."/>
            <person name="Squares S."/>
            <person name="Stevens K."/>
            <person name="Unwin L."/>
            <person name="Whitehead S."/>
            <person name="Barrell B.G."/>
            <person name="Maskell D.J."/>
        </authorList>
    </citation>
    <scope>NUCLEOTIDE SEQUENCE [LARGE SCALE GENOMIC DNA]</scope>
    <source>
        <strain>ATCC BAA-588 / NCTC 13252 / RB50</strain>
    </source>
</reference>
<name>GSA_BORBR</name>
<keyword id="KW-0963">Cytoplasm</keyword>
<keyword id="KW-0413">Isomerase</keyword>
<keyword id="KW-0627">Porphyrin biosynthesis</keyword>
<keyword id="KW-0663">Pyridoxal phosphate</keyword>
<evidence type="ECO:0000255" key="1">
    <source>
        <dbReference type="HAMAP-Rule" id="MF_00375"/>
    </source>
</evidence>
<comment type="catalytic activity">
    <reaction evidence="1">
        <text>(S)-4-amino-5-oxopentanoate = 5-aminolevulinate</text>
        <dbReference type="Rhea" id="RHEA:14265"/>
        <dbReference type="ChEBI" id="CHEBI:57501"/>
        <dbReference type="ChEBI" id="CHEBI:356416"/>
        <dbReference type="EC" id="5.4.3.8"/>
    </reaction>
</comment>
<comment type="cofactor">
    <cofactor evidence="1">
        <name>pyridoxal 5'-phosphate</name>
        <dbReference type="ChEBI" id="CHEBI:597326"/>
    </cofactor>
</comment>
<comment type="pathway">
    <text evidence="1">Porphyrin-containing compound metabolism; protoporphyrin-IX biosynthesis; 5-aminolevulinate from L-glutamyl-tRNA(Glu): step 2/2.</text>
</comment>
<comment type="subunit">
    <text evidence="1">Homodimer.</text>
</comment>
<comment type="subcellular location">
    <subcellularLocation>
        <location evidence="1">Cytoplasm</location>
    </subcellularLocation>
</comment>
<comment type="similarity">
    <text evidence="1">Belongs to the class-III pyridoxal-phosphate-dependent aminotransferase family. HemL subfamily.</text>
</comment>
<protein>
    <recommendedName>
        <fullName evidence="1">Glutamate-1-semialdehyde 2,1-aminomutase</fullName>
        <shortName evidence="1">GSA</shortName>
        <ecNumber evidence="1">5.4.3.8</ecNumber>
    </recommendedName>
    <alternativeName>
        <fullName evidence="1">Glutamate-1-semialdehyde aminotransferase</fullName>
        <shortName evidence="1">GSA-AT</shortName>
    </alternativeName>
</protein>